<protein>
    <recommendedName>
        <fullName evidence="1">Sec-independent protein translocase protein TatA</fullName>
    </recommendedName>
</protein>
<proteinExistence type="inferred from homology"/>
<keyword id="KW-0997">Cell inner membrane</keyword>
<keyword id="KW-1003">Cell membrane</keyword>
<keyword id="KW-0472">Membrane</keyword>
<keyword id="KW-0653">Protein transport</keyword>
<keyword id="KW-0811">Translocation</keyword>
<keyword id="KW-0812">Transmembrane</keyword>
<keyword id="KW-1133">Transmembrane helix</keyword>
<keyword id="KW-0813">Transport</keyword>
<name>TATA_RHILO</name>
<comment type="function">
    <text evidence="1">Part of the twin-arginine translocation (Tat) system that transports large folded proteins containing a characteristic twin-arginine motif in their signal peptide across membranes. TatA could form the protein-conducting channel of the Tat system.</text>
</comment>
<comment type="subunit">
    <text evidence="1">The Tat system comprises two distinct complexes: a TatABC complex, containing multiple copies of TatA, TatB and TatC subunits, and a separate TatA complex, containing only TatA subunits. Substrates initially bind to the TatABC complex, which probably triggers association of the separate TatA complex to form the active translocon.</text>
</comment>
<comment type="subcellular location">
    <subcellularLocation>
        <location evidence="1">Cell inner membrane</location>
        <topology evidence="1">Single-pass membrane protein</topology>
    </subcellularLocation>
</comment>
<comment type="similarity">
    <text evidence="1">Belongs to the TatA/E family.</text>
</comment>
<sequence length="73" mass="8109">MGSFSIWHWMIVLVIVLLVFGRGKIPELMGDMAKGIKSFKKGMADDDVADDKRTVEHRADETVSAVKEKASKS</sequence>
<dbReference type="EMBL" id="BA000012">
    <property type="protein sequence ID" value="BAB48538.1"/>
    <property type="molecule type" value="Genomic_DNA"/>
</dbReference>
<dbReference type="RefSeq" id="WP_010909892.1">
    <property type="nucleotide sequence ID" value="NC_002678.2"/>
</dbReference>
<dbReference type="SMR" id="Q98LC5"/>
<dbReference type="KEGG" id="mlo:msl1085"/>
<dbReference type="eggNOG" id="COG1826">
    <property type="taxonomic scope" value="Bacteria"/>
</dbReference>
<dbReference type="HOGENOM" id="CLU_086034_5_0_5"/>
<dbReference type="Proteomes" id="UP000000552">
    <property type="component" value="Chromosome"/>
</dbReference>
<dbReference type="GO" id="GO:0033281">
    <property type="term" value="C:TAT protein transport complex"/>
    <property type="evidence" value="ECO:0007669"/>
    <property type="project" value="UniProtKB-UniRule"/>
</dbReference>
<dbReference type="GO" id="GO:0008320">
    <property type="term" value="F:protein transmembrane transporter activity"/>
    <property type="evidence" value="ECO:0007669"/>
    <property type="project" value="UniProtKB-UniRule"/>
</dbReference>
<dbReference type="GO" id="GO:0043953">
    <property type="term" value="P:protein transport by the Tat complex"/>
    <property type="evidence" value="ECO:0007669"/>
    <property type="project" value="UniProtKB-UniRule"/>
</dbReference>
<dbReference type="Gene3D" id="1.20.5.3310">
    <property type="match status" value="1"/>
</dbReference>
<dbReference type="HAMAP" id="MF_00236">
    <property type="entry name" value="TatA_E"/>
    <property type="match status" value="1"/>
</dbReference>
<dbReference type="InterPro" id="IPR003369">
    <property type="entry name" value="TatA/B/E"/>
</dbReference>
<dbReference type="InterPro" id="IPR006312">
    <property type="entry name" value="TatA/E"/>
</dbReference>
<dbReference type="NCBIfam" id="NF001940">
    <property type="entry name" value="PRK00720.1"/>
    <property type="match status" value="1"/>
</dbReference>
<dbReference type="NCBIfam" id="TIGR01411">
    <property type="entry name" value="tatAE"/>
    <property type="match status" value="1"/>
</dbReference>
<dbReference type="PANTHER" id="PTHR42982">
    <property type="entry name" value="SEC-INDEPENDENT PROTEIN TRANSLOCASE PROTEIN TATA"/>
    <property type="match status" value="1"/>
</dbReference>
<dbReference type="PANTHER" id="PTHR42982:SF1">
    <property type="entry name" value="SEC-INDEPENDENT PROTEIN TRANSLOCASE PROTEIN TATA"/>
    <property type="match status" value="1"/>
</dbReference>
<dbReference type="Pfam" id="PF02416">
    <property type="entry name" value="TatA_B_E"/>
    <property type="match status" value="1"/>
</dbReference>
<feature type="chain" id="PRO_0000097953" description="Sec-independent protein translocase protein TatA">
    <location>
        <begin position="1"/>
        <end position="73"/>
    </location>
</feature>
<feature type="transmembrane region" description="Helical" evidence="1">
    <location>
        <begin position="1"/>
        <end position="21"/>
    </location>
</feature>
<evidence type="ECO:0000255" key="1">
    <source>
        <dbReference type="HAMAP-Rule" id="MF_00236"/>
    </source>
</evidence>
<gene>
    <name evidence="1" type="primary">tatA</name>
    <name type="ordered locus">msl1085</name>
</gene>
<reference key="1">
    <citation type="journal article" date="2000" name="DNA Res.">
        <title>Complete genome structure of the nitrogen-fixing symbiotic bacterium Mesorhizobium loti.</title>
        <authorList>
            <person name="Kaneko T."/>
            <person name="Nakamura Y."/>
            <person name="Sato S."/>
            <person name="Asamizu E."/>
            <person name="Kato T."/>
            <person name="Sasamoto S."/>
            <person name="Watanabe A."/>
            <person name="Idesawa K."/>
            <person name="Ishikawa A."/>
            <person name="Kawashima K."/>
            <person name="Kimura T."/>
            <person name="Kishida Y."/>
            <person name="Kiyokawa C."/>
            <person name="Kohara M."/>
            <person name="Matsumoto M."/>
            <person name="Matsuno A."/>
            <person name="Mochizuki Y."/>
            <person name="Nakayama S."/>
            <person name="Nakazaki N."/>
            <person name="Shimpo S."/>
            <person name="Sugimoto M."/>
            <person name="Takeuchi C."/>
            <person name="Yamada M."/>
            <person name="Tabata S."/>
        </authorList>
    </citation>
    <scope>NUCLEOTIDE SEQUENCE [LARGE SCALE GENOMIC DNA]</scope>
    <source>
        <strain>LMG 29417 / CECT 9101 / MAFF 303099</strain>
    </source>
</reference>
<organism>
    <name type="scientific">Mesorhizobium japonicum (strain LMG 29417 / CECT 9101 / MAFF 303099)</name>
    <name type="common">Mesorhizobium loti (strain MAFF 303099)</name>
    <dbReference type="NCBI Taxonomy" id="266835"/>
    <lineage>
        <taxon>Bacteria</taxon>
        <taxon>Pseudomonadati</taxon>
        <taxon>Pseudomonadota</taxon>
        <taxon>Alphaproteobacteria</taxon>
        <taxon>Hyphomicrobiales</taxon>
        <taxon>Phyllobacteriaceae</taxon>
        <taxon>Mesorhizobium</taxon>
    </lineage>
</organism>
<accession>Q98LC5</accession>